<dbReference type="EMBL" id="AP008934">
    <property type="protein sequence ID" value="BAE18969.1"/>
    <property type="molecule type" value="Genomic_DNA"/>
</dbReference>
<dbReference type="RefSeq" id="WP_011303515.1">
    <property type="nucleotide sequence ID" value="NZ_MTGA01000039.1"/>
</dbReference>
<dbReference type="SMR" id="Q49W90"/>
<dbReference type="GeneID" id="66867998"/>
<dbReference type="KEGG" id="ssp:SSP1824"/>
<dbReference type="eggNOG" id="COG2111">
    <property type="taxonomic scope" value="Bacteria"/>
</dbReference>
<dbReference type="HOGENOM" id="CLU_101659_1_1_9"/>
<dbReference type="OrthoDB" id="9798859at2"/>
<dbReference type="Proteomes" id="UP000006371">
    <property type="component" value="Chromosome"/>
</dbReference>
<dbReference type="GO" id="GO:0005886">
    <property type="term" value="C:plasma membrane"/>
    <property type="evidence" value="ECO:0007669"/>
    <property type="project" value="UniProtKB-SubCell"/>
</dbReference>
<dbReference type="GO" id="GO:0015297">
    <property type="term" value="F:antiporter activity"/>
    <property type="evidence" value="ECO:0007669"/>
    <property type="project" value="UniProtKB-KW"/>
</dbReference>
<dbReference type="GO" id="GO:0008324">
    <property type="term" value="F:monoatomic cation transmembrane transporter activity"/>
    <property type="evidence" value="ECO:0007669"/>
    <property type="project" value="InterPro"/>
</dbReference>
<dbReference type="GO" id="GO:1902600">
    <property type="term" value="P:proton transmembrane transport"/>
    <property type="evidence" value="ECO:0007669"/>
    <property type="project" value="UniProtKB-KW"/>
</dbReference>
<dbReference type="GO" id="GO:0006814">
    <property type="term" value="P:sodium ion transport"/>
    <property type="evidence" value="ECO:0007669"/>
    <property type="project" value="UniProtKB-KW"/>
</dbReference>
<dbReference type="InterPro" id="IPR050622">
    <property type="entry name" value="CPA3_antiporter_subunitB"/>
</dbReference>
<dbReference type="InterPro" id="IPR005281">
    <property type="entry name" value="CPA3_sub_B"/>
</dbReference>
<dbReference type="InterPro" id="IPR007182">
    <property type="entry name" value="MnhB"/>
</dbReference>
<dbReference type="NCBIfam" id="TIGR00943">
    <property type="entry name" value="2a6301s02"/>
    <property type="match status" value="1"/>
</dbReference>
<dbReference type="NCBIfam" id="NF009223">
    <property type="entry name" value="PRK12573.1"/>
    <property type="match status" value="1"/>
</dbReference>
<dbReference type="PANTHER" id="PTHR33932">
    <property type="entry name" value="NA(+)/H(+) ANTIPORTER SUBUNIT B"/>
    <property type="match status" value="1"/>
</dbReference>
<dbReference type="PANTHER" id="PTHR33932:SF4">
    <property type="entry name" value="NA(+)_H(+) ANTIPORTER SUBUNIT B"/>
    <property type="match status" value="1"/>
</dbReference>
<dbReference type="Pfam" id="PF04039">
    <property type="entry name" value="MnhB"/>
    <property type="match status" value="1"/>
</dbReference>
<evidence type="ECO:0000250" key="1"/>
<evidence type="ECO:0000255" key="2"/>
<evidence type="ECO:0000305" key="3"/>
<protein>
    <recommendedName>
        <fullName>Na(+)/H(+) antiporter subunit B1</fullName>
    </recommendedName>
    <alternativeName>
        <fullName>Mnh complex subunit B1</fullName>
    </alternativeName>
</protein>
<comment type="function">
    <text evidence="1">Mnh complex is a Na(+)/H(+) antiporter involved in Na(+) excretion.</text>
</comment>
<comment type="subunit">
    <text evidence="1">May form a heterooligomeric complex that consists of seven subunits: mnhA1, mnhB1, mnhC1, mnhD1, mnhE1, mnhF1 and mnhG1.</text>
</comment>
<comment type="subcellular location">
    <subcellularLocation>
        <location evidence="3">Cell membrane</location>
        <topology evidence="3">Multi-pass membrane protein</topology>
    </subcellularLocation>
</comment>
<comment type="similarity">
    <text evidence="3">Belongs to the CPA3 antiporters (TC 2.A.63) subunit B family.</text>
</comment>
<accession>Q49W90</accession>
<name>MNHB1_STAS1</name>
<gene>
    <name type="primary">mnhB1</name>
    <name type="ordered locus">SSP1824</name>
</gene>
<proteinExistence type="inferred from homology"/>
<sequence length="142" mass="15794">MNRQKNNLIFQYSAVVIFFLIVMFGLSLFLAGHYTPGGGFVGGLLLSSALVIITVAFDIKTMRKIFPWDFKILIGIGLLFCLATPMASWFYNKNFFTHTPFEIPLGILPPMEMHTATFFDLGVMCAVVGTVMTIILSIGENE</sequence>
<organism>
    <name type="scientific">Staphylococcus saprophyticus subsp. saprophyticus (strain ATCC 15305 / DSM 20229 / NCIMB 8711 / NCTC 7292 / S-41)</name>
    <dbReference type="NCBI Taxonomy" id="342451"/>
    <lineage>
        <taxon>Bacteria</taxon>
        <taxon>Bacillati</taxon>
        <taxon>Bacillota</taxon>
        <taxon>Bacilli</taxon>
        <taxon>Bacillales</taxon>
        <taxon>Staphylococcaceae</taxon>
        <taxon>Staphylococcus</taxon>
    </lineage>
</organism>
<reference key="1">
    <citation type="journal article" date="2005" name="Proc. Natl. Acad. Sci. U.S.A.">
        <title>Whole genome sequence of Staphylococcus saprophyticus reveals the pathogenesis of uncomplicated urinary tract infection.</title>
        <authorList>
            <person name="Kuroda M."/>
            <person name="Yamashita A."/>
            <person name="Hirakawa H."/>
            <person name="Kumano M."/>
            <person name="Morikawa K."/>
            <person name="Higashide M."/>
            <person name="Maruyama A."/>
            <person name="Inose Y."/>
            <person name="Matoba K."/>
            <person name="Toh H."/>
            <person name="Kuhara S."/>
            <person name="Hattori M."/>
            <person name="Ohta T."/>
        </authorList>
    </citation>
    <scope>NUCLEOTIDE SEQUENCE [LARGE SCALE GENOMIC DNA]</scope>
    <source>
        <strain>ATCC 15305 / DSM 20229 / NCIMB 8711 / NCTC 7292 / S-41</strain>
    </source>
</reference>
<keyword id="KW-0050">Antiport</keyword>
<keyword id="KW-1003">Cell membrane</keyword>
<keyword id="KW-0375">Hydrogen ion transport</keyword>
<keyword id="KW-0406">Ion transport</keyword>
<keyword id="KW-0472">Membrane</keyword>
<keyword id="KW-1185">Reference proteome</keyword>
<keyword id="KW-0915">Sodium</keyword>
<keyword id="KW-0739">Sodium transport</keyword>
<keyword id="KW-0812">Transmembrane</keyword>
<keyword id="KW-1133">Transmembrane helix</keyword>
<keyword id="KW-0813">Transport</keyword>
<feature type="chain" id="PRO_0000372116" description="Na(+)/H(+) antiporter subunit B1">
    <location>
        <begin position="1"/>
        <end position="142"/>
    </location>
</feature>
<feature type="transmembrane region" description="Helical" evidence="2">
    <location>
        <begin position="12"/>
        <end position="32"/>
    </location>
</feature>
<feature type="transmembrane region" description="Helical" evidence="2">
    <location>
        <begin position="37"/>
        <end position="57"/>
    </location>
</feature>
<feature type="transmembrane region" description="Helical" evidence="2">
    <location>
        <begin position="70"/>
        <end position="90"/>
    </location>
</feature>
<feature type="transmembrane region" description="Helical" evidence="2">
    <location>
        <begin position="118"/>
        <end position="138"/>
    </location>
</feature>